<proteinExistence type="evidence at protein level"/>
<comment type="function">
    <text evidence="2 3">Binds both saxitoxin and tetradotoxin. May play a role in toxin accumulation and/or excretion.</text>
</comment>
<comment type="subunit">
    <text evidence="2">Homodimer or heterodimer of PSTBP1 and PSTBP2.</text>
</comment>
<comment type="subcellular location">
    <subcellularLocation>
        <location>Secreted</location>
    </subcellularLocation>
</comment>
<comment type="PTM">
    <text evidence="2">Glycosylated.</text>
</comment>
<sequence>MGAVPGVVLLLMLAVLGIRAAPAPEECHKLTKPVTKADVQSVSGDWVLVWSVANTTERWICENLTSSYVEFKLHSDIIEYTERNLFLGNSCISFYSNLSASTEKQQQFSLNNLQMEEKGVVRPFNDNGTVKFFETCVDCLSMEYSGDIGRFLLIYRRDGVHQNVEVLKAAQDESQKLAECLGFSIDEPFIYDGVSDFCHKKSPEECHKLTKPVTKADVQSVSGDWVLVWSIDENSTISDDWKKLKTSYVEQRVDSGVIRFTERNMLKNNSCMTFKTNMTAGPESQNTFIYTSGKMEENGVVTVLDENGTVKFFETCADCLSMEYSGFFGHFLLIYRRDGVHQNVEVLKAAQDESQKLAECLGFSIDEPFIYDGVSDFCHKKSSPEVKPEQD</sequence>
<dbReference type="EMBL" id="AB055707">
    <property type="protein sequence ID" value="BAB55581.2"/>
    <property type="molecule type" value="mRNA"/>
</dbReference>
<dbReference type="SMR" id="Q90WJ7"/>
<dbReference type="GlyCosmos" id="Q90WJ7">
    <property type="glycosylation" value="7 sites, No reported glycans"/>
</dbReference>
<dbReference type="GO" id="GO:0005737">
    <property type="term" value="C:cytoplasm"/>
    <property type="evidence" value="ECO:0000314"/>
    <property type="project" value="CACAO"/>
</dbReference>
<dbReference type="GO" id="GO:0005576">
    <property type="term" value="C:extracellular region"/>
    <property type="evidence" value="ECO:0007669"/>
    <property type="project" value="UniProtKB-SubCell"/>
</dbReference>
<dbReference type="GO" id="GO:0019534">
    <property type="term" value="F:toxin transmembrane transporter activity"/>
    <property type="evidence" value="ECO:0000303"/>
    <property type="project" value="UniProtKB"/>
</dbReference>
<dbReference type="GO" id="GO:0009636">
    <property type="term" value="P:response to toxic substance"/>
    <property type="evidence" value="ECO:0000303"/>
    <property type="project" value="UniProtKB"/>
</dbReference>
<dbReference type="FunFam" id="2.40.128.20:FF:000035">
    <property type="entry name" value="Pufferfish saxitoxin and tetrodotoxin binding protein type 2_1"/>
    <property type="match status" value="2"/>
</dbReference>
<dbReference type="Gene3D" id="2.40.128.20">
    <property type="match status" value="2"/>
</dbReference>
<dbReference type="InterPro" id="IPR012674">
    <property type="entry name" value="Calycin"/>
</dbReference>
<dbReference type="PANTHER" id="PTHR11967">
    <property type="entry name" value="ALPHA-1-ACID GLYCOPROTEIN"/>
    <property type="match status" value="1"/>
</dbReference>
<dbReference type="PANTHER" id="PTHR11967:SF2">
    <property type="entry name" value="ALPHA-1-ACID GLYCOPROTEIN 1"/>
    <property type="match status" value="1"/>
</dbReference>
<dbReference type="SUPFAM" id="SSF50814">
    <property type="entry name" value="Lipocalins"/>
    <property type="match status" value="1"/>
</dbReference>
<reference evidence="4" key="1">
    <citation type="journal article" date="2001" name="Eur. J. Biochem.">
        <title>Purification, characterization, and cDNA cloning of a novel soluble saxitoxin and tetrodotoxin binding protein from plasma of the puffer fish, Fugu pardalis.</title>
        <authorList>
            <person name="Yotsu-Yamashita M."/>
            <person name="Sugimoto A."/>
            <person name="Terakawa T."/>
            <person name="Shoji Y."/>
            <person name="Miyazawa T."/>
            <person name="Yasumoto T."/>
        </authorList>
    </citation>
    <scope>NUCLEOTIDE SEQUENCE [MRNA]</scope>
    <scope>PROTEIN SEQUENCE OF 21-44; 116-140 AND 323-367</scope>
    <scope>FUNCTION</scope>
    <scope>SUBUNIT</scope>
    <scope>GLYCOSYLATION</scope>
    <source>
        <tissue>Liver</tissue>
    </source>
</reference>
<protein>
    <recommendedName>
        <fullName>Saxitoxin and tetrodotoxin-binding protein 1</fullName>
    </recommendedName>
</protein>
<organism evidence="5">
    <name type="scientific">Takifugu pardalis</name>
    <name type="common">Panther puffer</name>
    <name type="synonym">Tetraodon pardalis</name>
    <dbReference type="NCBI Taxonomy" id="98921"/>
    <lineage>
        <taxon>Eukaryota</taxon>
        <taxon>Metazoa</taxon>
        <taxon>Chordata</taxon>
        <taxon>Craniata</taxon>
        <taxon>Vertebrata</taxon>
        <taxon>Euteleostomi</taxon>
        <taxon>Actinopterygii</taxon>
        <taxon>Neopterygii</taxon>
        <taxon>Teleostei</taxon>
        <taxon>Neoteleostei</taxon>
        <taxon>Acanthomorphata</taxon>
        <taxon>Eupercaria</taxon>
        <taxon>Tetraodontiformes</taxon>
        <taxon>Tetradontoidea</taxon>
        <taxon>Tetraodontidae</taxon>
        <taxon>Takifugu</taxon>
    </lineage>
</organism>
<evidence type="ECO:0000255" key="1"/>
<evidence type="ECO:0000269" key="2">
    <source>
    </source>
</evidence>
<evidence type="ECO:0000303" key="3">
    <source>
    </source>
</evidence>
<evidence type="ECO:0000305" key="4"/>
<evidence type="ECO:0000312" key="5">
    <source>
        <dbReference type="EMBL" id="BAB55581.2"/>
    </source>
</evidence>
<name>SXT1_TAKPA</name>
<keyword id="KW-0903">Direct protein sequencing</keyword>
<keyword id="KW-0325">Glycoprotein</keyword>
<keyword id="KW-0677">Repeat</keyword>
<keyword id="KW-0964">Secreted</keyword>
<keyword id="KW-0732">Signal</keyword>
<gene>
    <name type="primary">psbp1</name>
    <name type="synonym">pstbp1</name>
</gene>
<accession>Q90WJ7</accession>
<feature type="signal peptide" evidence="2">
    <location>
        <begin position="1"/>
        <end position="20"/>
    </location>
</feature>
<feature type="chain" id="PRO_0000022459" description="Saxitoxin and tetrodotoxin-binding protein 1">
    <location>
        <begin position="21"/>
        <end position="391"/>
    </location>
</feature>
<feature type="repeat" description="1">
    <location>
        <begin position="24"/>
        <end position="202"/>
    </location>
</feature>
<feature type="repeat" description="2">
    <location>
        <begin position="203"/>
        <end position="391"/>
    </location>
</feature>
<feature type="glycosylation site" description="N-linked (GlcNAc...) asparagine" evidence="1">
    <location>
        <position position="54"/>
    </location>
</feature>
<feature type="glycosylation site" description="N-linked (GlcNAc...) asparagine" evidence="1">
    <location>
        <position position="63"/>
    </location>
</feature>
<feature type="glycosylation site" description="N-linked (GlcNAc...) asparagine" evidence="1">
    <location>
        <position position="97"/>
    </location>
</feature>
<feature type="glycosylation site" description="N-linked (GlcNAc...) asparagine" evidence="1">
    <location>
        <position position="234"/>
    </location>
</feature>
<feature type="glycosylation site" description="N-linked (GlcNAc...) asparagine" evidence="1">
    <location>
        <position position="268"/>
    </location>
</feature>
<feature type="glycosylation site" description="N-linked (GlcNAc...) asparagine" evidence="1">
    <location>
        <position position="277"/>
    </location>
</feature>
<feature type="glycosylation site" description="N-linked (GlcNAc...) asparagine" evidence="1">
    <location>
        <position position="307"/>
    </location>
</feature>
<feature type="sequence conflict" description="In Ref. 1; Fig.7." evidence="4" ref="1">
    <location>
        <begin position="253"/>
        <end position="254"/>
    </location>
</feature>